<name>SYGB_AZOVD</name>
<sequence length="685" mass="75077">MSAQDFLVELGSEELPPKALKSLATAFLAGIEKGLAAAGLEYRVARFYAAPRRLAVLVEHLVAQQPDRTLNLDGPPVAAAFDAEGNPTQAALGFARKCGVELHEIDSSGAKLRYSRHIPGQPASALLPAIVQASLDELPIPKRMRWGTRKEEFVRPSQWLVMLFGNQVVDCEILAQKAGRESMGHRFHHPDAVRISQPSSYLEDLRSAYVLADFAERRELIAGRVADLAAQQQGSAVVPEDLLDEVTALVEWPVPLVCSFEERFLTVPQEALISTMQDNQKYFCLLDANGKLLPCFITVANIESRDPAQIVAGNEKVVRPRLTDAEFFFNQDKRQPLESFNQRLASVVFQAQLGSVLEKAERVSRLAGFIAERIGGDPQHAIRAGLLSKADLASEMVGEFPELQGIAGYHYALNAGEPEDIARALDEQYMPRGAGAQLPSTLTGAAVAMADKLDTLVGIFGIGMPPTGSKDPYALRRAALGILRILIEKQLDLNLEEASHFAVAQYGTKVKASGLAEQVSEFVFDRLRARYEDEGIDVSSYLAVRALQPASAYDLDLRVQAVQAFRRLPEAEALAAVNKRVSNLLGKYEGKLPAAIEARYFDNASEFSLYSALQQAQHAVRPLAAERRYREALERLASLRDPVDAYFEAVLVNAEDPAIRANRHAMLAQLRGLFLCVADISVLGQ</sequence>
<keyword id="KW-0030">Aminoacyl-tRNA synthetase</keyword>
<keyword id="KW-0067">ATP-binding</keyword>
<keyword id="KW-0963">Cytoplasm</keyword>
<keyword id="KW-0436">Ligase</keyword>
<keyword id="KW-0547">Nucleotide-binding</keyword>
<keyword id="KW-0648">Protein biosynthesis</keyword>
<organism>
    <name type="scientific">Azotobacter vinelandii (strain DJ / ATCC BAA-1303)</name>
    <dbReference type="NCBI Taxonomy" id="322710"/>
    <lineage>
        <taxon>Bacteria</taxon>
        <taxon>Pseudomonadati</taxon>
        <taxon>Pseudomonadota</taxon>
        <taxon>Gammaproteobacteria</taxon>
        <taxon>Pseudomonadales</taxon>
        <taxon>Pseudomonadaceae</taxon>
        <taxon>Azotobacter</taxon>
    </lineage>
</organism>
<reference key="1">
    <citation type="journal article" date="2009" name="J. Bacteriol.">
        <title>Genome sequence of Azotobacter vinelandii, an obligate aerobe specialized to support diverse anaerobic metabolic processes.</title>
        <authorList>
            <person name="Setubal J.C."/>
            <person name="Dos Santos P."/>
            <person name="Goldman B.S."/>
            <person name="Ertesvaag H."/>
            <person name="Espin G."/>
            <person name="Rubio L.M."/>
            <person name="Valla S."/>
            <person name="Almeida N.F."/>
            <person name="Balasubramanian D."/>
            <person name="Cromes L."/>
            <person name="Curatti L."/>
            <person name="Du Z."/>
            <person name="Godsy E."/>
            <person name="Goodner B."/>
            <person name="Hellner-Burris K."/>
            <person name="Hernandez J.A."/>
            <person name="Houmiel K."/>
            <person name="Imperial J."/>
            <person name="Kennedy C."/>
            <person name="Larson T.J."/>
            <person name="Latreille P."/>
            <person name="Ligon L.S."/>
            <person name="Lu J."/>
            <person name="Maerk M."/>
            <person name="Miller N.M."/>
            <person name="Norton S."/>
            <person name="O'Carroll I.P."/>
            <person name="Paulsen I."/>
            <person name="Raulfs E.C."/>
            <person name="Roemer R."/>
            <person name="Rosser J."/>
            <person name="Segura D."/>
            <person name="Slater S."/>
            <person name="Stricklin S.L."/>
            <person name="Studholme D.J."/>
            <person name="Sun J."/>
            <person name="Viana C.J."/>
            <person name="Wallin E."/>
            <person name="Wang B."/>
            <person name="Wheeler C."/>
            <person name="Zhu H."/>
            <person name="Dean D.R."/>
            <person name="Dixon R."/>
            <person name="Wood D."/>
        </authorList>
    </citation>
    <scope>NUCLEOTIDE SEQUENCE [LARGE SCALE GENOMIC DNA]</scope>
    <source>
        <strain>DJ / ATCC BAA-1303</strain>
    </source>
</reference>
<proteinExistence type="inferred from homology"/>
<protein>
    <recommendedName>
        <fullName evidence="1">Glycine--tRNA ligase beta subunit</fullName>
        <ecNumber evidence="1">6.1.1.14</ecNumber>
    </recommendedName>
    <alternativeName>
        <fullName evidence="1">Glycyl-tRNA synthetase beta subunit</fullName>
        <shortName evidence="1">GlyRS</shortName>
    </alternativeName>
</protein>
<gene>
    <name evidence="1" type="primary">glyS</name>
    <name type="ordered locus">Avin_00100</name>
</gene>
<feature type="chain" id="PRO_1000204599" description="Glycine--tRNA ligase beta subunit">
    <location>
        <begin position="1"/>
        <end position="685"/>
    </location>
</feature>
<evidence type="ECO:0000255" key="1">
    <source>
        <dbReference type="HAMAP-Rule" id="MF_00255"/>
    </source>
</evidence>
<comment type="catalytic activity">
    <reaction evidence="1">
        <text>tRNA(Gly) + glycine + ATP = glycyl-tRNA(Gly) + AMP + diphosphate</text>
        <dbReference type="Rhea" id="RHEA:16013"/>
        <dbReference type="Rhea" id="RHEA-COMP:9664"/>
        <dbReference type="Rhea" id="RHEA-COMP:9683"/>
        <dbReference type="ChEBI" id="CHEBI:30616"/>
        <dbReference type="ChEBI" id="CHEBI:33019"/>
        <dbReference type="ChEBI" id="CHEBI:57305"/>
        <dbReference type="ChEBI" id="CHEBI:78442"/>
        <dbReference type="ChEBI" id="CHEBI:78522"/>
        <dbReference type="ChEBI" id="CHEBI:456215"/>
        <dbReference type="EC" id="6.1.1.14"/>
    </reaction>
</comment>
<comment type="subunit">
    <text evidence="1">Tetramer of two alpha and two beta subunits.</text>
</comment>
<comment type="subcellular location">
    <subcellularLocation>
        <location evidence="1">Cytoplasm</location>
    </subcellularLocation>
</comment>
<comment type="similarity">
    <text evidence="1">Belongs to the class-II aminoacyl-tRNA synthetase family.</text>
</comment>
<dbReference type="EC" id="6.1.1.14" evidence="1"/>
<dbReference type="EMBL" id="CP001157">
    <property type="protein sequence ID" value="ACO76278.1"/>
    <property type="molecule type" value="Genomic_DNA"/>
</dbReference>
<dbReference type="RefSeq" id="WP_012698706.1">
    <property type="nucleotide sequence ID" value="NC_012560.1"/>
</dbReference>
<dbReference type="SMR" id="C1DFV1"/>
<dbReference type="STRING" id="322710.Avin_00100"/>
<dbReference type="EnsemblBacteria" id="ACO76278">
    <property type="protein sequence ID" value="ACO76278"/>
    <property type="gene ID" value="Avin_00100"/>
</dbReference>
<dbReference type="GeneID" id="88183488"/>
<dbReference type="KEGG" id="avn:Avin_00100"/>
<dbReference type="eggNOG" id="COG0751">
    <property type="taxonomic scope" value="Bacteria"/>
</dbReference>
<dbReference type="HOGENOM" id="CLU_007220_2_2_6"/>
<dbReference type="OrthoDB" id="9775440at2"/>
<dbReference type="Proteomes" id="UP000002424">
    <property type="component" value="Chromosome"/>
</dbReference>
<dbReference type="GO" id="GO:0005829">
    <property type="term" value="C:cytosol"/>
    <property type="evidence" value="ECO:0007669"/>
    <property type="project" value="TreeGrafter"/>
</dbReference>
<dbReference type="GO" id="GO:0004814">
    <property type="term" value="F:arginine-tRNA ligase activity"/>
    <property type="evidence" value="ECO:0007669"/>
    <property type="project" value="InterPro"/>
</dbReference>
<dbReference type="GO" id="GO:0005524">
    <property type="term" value="F:ATP binding"/>
    <property type="evidence" value="ECO:0007669"/>
    <property type="project" value="UniProtKB-UniRule"/>
</dbReference>
<dbReference type="GO" id="GO:0004820">
    <property type="term" value="F:glycine-tRNA ligase activity"/>
    <property type="evidence" value="ECO:0007669"/>
    <property type="project" value="UniProtKB-UniRule"/>
</dbReference>
<dbReference type="GO" id="GO:0006420">
    <property type="term" value="P:arginyl-tRNA aminoacylation"/>
    <property type="evidence" value="ECO:0007669"/>
    <property type="project" value="InterPro"/>
</dbReference>
<dbReference type="GO" id="GO:0006426">
    <property type="term" value="P:glycyl-tRNA aminoacylation"/>
    <property type="evidence" value="ECO:0007669"/>
    <property type="project" value="UniProtKB-UniRule"/>
</dbReference>
<dbReference type="HAMAP" id="MF_00255">
    <property type="entry name" value="Gly_tRNA_synth_beta"/>
    <property type="match status" value="1"/>
</dbReference>
<dbReference type="InterPro" id="IPR008909">
    <property type="entry name" value="DALR_anticod-bd"/>
</dbReference>
<dbReference type="InterPro" id="IPR015944">
    <property type="entry name" value="Gly-tRNA-synth_bsu"/>
</dbReference>
<dbReference type="InterPro" id="IPR006194">
    <property type="entry name" value="Gly-tRNA-synth_heterodimer"/>
</dbReference>
<dbReference type="NCBIfam" id="TIGR00211">
    <property type="entry name" value="glyS"/>
    <property type="match status" value="1"/>
</dbReference>
<dbReference type="PANTHER" id="PTHR30075:SF2">
    <property type="entry name" value="GLYCINE--TRNA LIGASE, CHLOROPLASTIC_MITOCHONDRIAL 2"/>
    <property type="match status" value="1"/>
</dbReference>
<dbReference type="PANTHER" id="PTHR30075">
    <property type="entry name" value="GLYCYL-TRNA SYNTHETASE"/>
    <property type="match status" value="1"/>
</dbReference>
<dbReference type="Pfam" id="PF05746">
    <property type="entry name" value="DALR_1"/>
    <property type="match status" value="1"/>
</dbReference>
<dbReference type="Pfam" id="PF02092">
    <property type="entry name" value="tRNA_synt_2f"/>
    <property type="match status" value="1"/>
</dbReference>
<dbReference type="PRINTS" id="PR01045">
    <property type="entry name" value="TRNASYNTHGB"/>
</dbReference>
<dbReference type="SUPFAM" id="SSF109604">
    <property type="entry name" value="HD-domain/PDEase-like"/>
    <property type="match status" value="1"/>
</dbReference>
<dbReference type="PROSITE" id="PS50861">
    <property type="entry name" value="AA_TRNA_LIGASE_II_GLYAB"/>
    <property type="match status" value="1"/>
</dbReference>
<accession>C1DFV1</accession>